<protein>
    <recommendedName>
        <fullName evidence="1">Interference hedgehog</fullName>
    </recommendedName>
</protein>
<dbReference type="EMBL" id="CH954177">
    <property type="protein sequence ID" value="EDV59153.1"/>
    <property type="molecule type" value="Genomic_DNA"/>
</dbReference>
<dbReference type="EMBL" id="DQ138811">
    <property type="protein sequence ID" value="ABA86417.1"/>
    <property type="molecule type" value="Genomic_DNA"/>
</dbReference>
<dbReference type="SMR" id="B3N666"/>
<dbReference type="GlyCosmos" id="B3N666">
    <property type="glycosylation" value="5 sites, No reported glycans"/>
</dbReference>
<dbReference type="EnsemblMetazoa" id="FBtr0143621">
    <property type="protein sequence ID" value="FBpp0142113"/>
    <property type="gene ID" value="FBgn0084860"/>
</dbReference>
<dbReference type="EnsemblMetazoa" id="XM_001970058.3">
    <property type="protein sequence ID" value="XP_001970094.1"/>
    <property type="gene ID" value="LOC6542132"/>
</dbReference>
<dbReference type="GeneID" id="6542132"/>
<dbReference type="KEGG" id="der:6542132"/>
<dbReference type="eggNOG" id="ENOG502QSGM">
    <property type="taxonomic scope" value="Eukaryota"/>
</dbReference>
<dbReference type="HOGENOM" id="CLU_004633_1_0_1"/>
<dbReference type="OMA" id="CGLMEGK"/>
<dbReference type="OrthoDB" id="9998697at2759"/>
<dbReference type="PhylomeDB" id="B3N666"/>
<dbReference type="Proteomes" id="UP000008711">
    <property type="component" value="Unassembled WGS sequence"/>
</dbReference>
<dbReference type="GO" id="GO:0030424">
    <property type="term" value="C:axon"/>
    <property type="evidence" value="ECO:0007669"/>
    <property type="project" value="TreeGrafter"/>
</dbReference>
<dbReference type="GO" id="GO:0009986">
    <property type="term" value="C:cell surface"/>
    <property type="evidence" value="ECO:0007669"/>
    <property type="project" value="EnsemblMetazoa"/>
</dbReference>
<dbReference type="GO" id="GO:0035230">
    <property type="term" value="C:cytoneme"/>
    <property type="evidence" value="ECO:0007669"/>
    <property type="project" value="EnsemblMetazoa"/>
</dbReference>
<dbReference type="GO" id="GO:0016020">
    <property type="term" value="C:membrane"/>
    <property type="evidence" value="ECO:0000250"/>
    <property type="project" value="UniProtKB"/>
</dbReference>
<dbReference type="GO" id="GO:0005886">
    <property type="term" value="C:plasma membrane"/>
    <property type="evidence" value="ECO:0007669"/>
    <property type="project" value="EnsemblMetazoa"/>
</dbReference>
<dbReference type="GO" id="GO:0015026">
    <property type="term" value="F:coreceptor activity"/>
    <property type="evidence" value="ECO:0007669"/>
    <property type="project" value="EnsemblMetazoa"/>
</dbReference>
<dbReference type="GO" id="GO:0097108">
    <property type="term" value="F:hedgehog family protein binding"/>
    <property type="evidence" value="ECO:0007669"/>
    <property type="project" value="EnsemblMetazoa"/>
</dbReference>
<dbReference type="GO" id="GO:0008201">
    <property type="term" value="F:heparin binding"/>
    <property type="evidence" value="ECO:0000250"/>
    <property type="project" value="UniProtKB"/>
</dbReference>
<dbReference type="GO" id="GO:0005113">
    <property type="term" value="F:patched binding"/>
    <property type="evidence" value="ECO:0007669"/>
    <property type="project" value="EnsemblMetazoa"/>
</dbReference>
<dbReference type="GO" id="GO:0042803">
    <property type="term" value="F:protein homodimerization activity"/>
    <property type="evidence" value="ECO:0000250"/>
    <property type="project" value="UniProtKB"/>
</dbReference>
<dbReference type="GO" id="GO:0007411">
    <property type="term" value="P:axon guidance"/>
    <property type="evidence" value="ECO:0007669"/>
    <property type="project" value="TreeGrafter"/>
</dbReference>
<dbReference type="GO" id="GO:0048749">
    <property type="term" value="P:compound eye development"/>
    <property type="evidence" value="ECO:0007669"/>
    <property type="project" value="EnsemblMetazoa"/>
</dbReference>
<dbReference type="GO" id="GO:0035017">
    <property type="term" value="P:cuticle pattern formation"/>
    <property type="evidence" value="ECO:0007669"/>
    <property type="project" value="EnsemblMetazoa"/>
</dbReference>
<dbReference type="GO" id="GO:0034109">
    <property type="term" value="P:homotypic cell-cell adhesion"/>
    <property type="evidence" value="ECO:0007669"/>
    <property type="project" value="EnsemblMetazoa"/>
</dbReference>
<dbReference type="GO" id="GO:0071694">
    <property type="term" value="P:maintenance of protein location in extracellular region"/>
    <property type="evidence" value="ECO:0007669"/>
    <property type="project" value="EnsemblMetazoa"/>
</dbReference>
<dbReference type="GO" id="GO:0007379">
    <property type="term" value="P:segment specification"/>
    <property type="evidence" value="ECO:0007669"/>
    <property type="project" value="EnsemblMetazoa"/>
</dbReference>
<dbReference type="GO" id="GO:0007224">
    <property type="term" value="P:smoothened signaling pathway"/>
    <property type="evidence" value="ECO:0000250"/>
    <property type="project" value="UniProtKB"/>
</dbReference>
<dbReference type="GO" id="GO:0048100">
    <property type="term" value="P:wing disc anterior/posterior pattern formation"/>
    <property type="evidence" value="ECO:0007669"/>
    <property type="project" value="EnsemblMetazoa"/>
</dbReference>
<dbReference type="CDD" id="cd00063">
    <property type="entry name" value="FN3"/>
    <property type="match status" value="2"/>
</dbReference>
<dbReference type="FunFam" id="2.60.40.10:FF:001723">
    <property type="entry name" value="Interference hedgehog"/>
    <property type="match status" value="1"/>
</dbReference>
<dbReference type="FunFam" id="2.60.40.10:FF:001747">
    <property type="entry name" value="Interference hedgehog"/>
    <property type="match status" value="1"/>
</dbReference>
<dbReference type="FunFam" id="2.60.40.10:FF:001773">
    <property type="entry name" value="Interference hedgehog"/>
    <property type="match status" value="1"/>
</dbReference>
<dbReference type="FunFam" id="2.60.40.10:FF:002071">
    <property type="entry name" value="Interference hedgehog"/>
    <property type="match status" value="1"/>
</dbReference>
<dbReference type="FunFam" id="2.60.40.10:FF:002212">
    <property type="entry name" value="Interference hedgehog"/>
    <property type="match status" value="1"/>
</dbReference>
<dbReference type="Gene3D" id="2.60.40.10">
    <property type="entry name" value="Immunoglobulins"/>
    <property type="match status" value="5"/>
</dbReference>
<dbReference type="InterPro" id="IPR003961">
    <property type="entry name" value="FN3_dom"/>
</dbReference>
<dbReference type="InterPro" id="IPR036116">
    <property type="entry name" value="FN3_sf"/>
</dbReference>
<dbReference type="InterPro" id="IPR007110">
    <property type="entry name" value="Ig-like_dom"/>
</dbReference>
<dbReference type="InterPro" id="IPR036179">
    <property type="entry name" value="Ig-like_dom_sf"/>
</dbReference>
<dbReference type="InterPro" id="IPR013783">
    <property type="entry name" value="Ig-like_fold"/>
</dbReference>
<dbReference type="InterPro" id="IPR003599">
    <property type="entry name" value="Ig_sub"/>
</dbReference>
<dbReference type="InterPro" id="IPR003598">
    <property type="entry name" value="Ig_sub2"/>
</dbReference>
<dbReference type="PANTHER" id="PTHR44170:SF33">
    <property type="entry name" value="BROTHER OF IHOG, ISOFORM G-RELATED"/>
    <property type="match status" value="1"/>
</dbReference>
<dbReference type="PANTHER" id="PTHR44170">
    <property type="entry name" value="PROTEIN SIDEKICK"/>
    <property type="match status" value="1"/>
</dbReference>
<dbReference type="Pfam" id="PF00041">
    <property type="entry name" value="fn3"/>
    <property type="match status" value="2"/>
</dbReference>
<dbReference type="Pfam" id="PF13895">
    <property type="entry name" value="Ig_2"/>
    <property type="match status" value="1"/>
</dbReference>
<dbReference type="Pfam" id="PF13927">
    <property type="entry name" value="Ig_3"/>
    <property type="match status" value="2"/>
</dbReference>
<dbReference type="SMART" id="SM00060">
    <property type="entry name" value="FN3"/>
    <property type="match status" value="2"/>
</dbReference>
<dbReference type="SMART" id="SM00409">
    <property type="entry name" value="IG"/>
    <property type="match status" value="4"/>
</dbReference>
<dbReference type="SMART" id="SM00408">
    <property type="entry name" value="IGc2"/>
    <property type="match status" value="3"/>
</dbReference>
<dbReference type="SUPFAM" id="SSF49265">
    <property type="entry name" value="Fibronectin type III"/>
    <property type="match status" value="1"/>
</dbReference>
<dbReference type="SUPFAM" id="SSF48726">
    <property type="entry name" value="Immunoglobulin"/>
    <property type="match status" value="3"/>
</dbReference>
<dbReference type="PROSITE" id="PS50853">
    <property type="entry name" value="FN3"/>
    <property type="match status" value="2"/>
</dbReference>
<dbReference type="PROSITE" id="PS50835">
    <property type="entry name" value="IG_LIKE"/>
    <property type="match status" value="4"/>
</dbReference>
<accession>B3N666</accession>
<accession>Q2XY51</accession>
<reference evidence="8" key="1">
    <citation type="journal article" date="2007" name="Nature">
        <title>Evolution of genes and genomes on the Drosophila phylogeny.</title>
        <authorList>
            <consortium name="Drosophila 12 genomes consortium"/>
        </authorList>
    </citation>
    <scope>NUCLEOTIDE SEQUENCE [LARGE SCALE GENOMIC DNA]</scope>
    <source>
        <strain evidence="8">Tucson 14021-0224.01</strain>
    </source>
</reference>
<reference evidence="6 7" key="2">
    <citation type="journal article" date="2005" name="Mol. Biol. Evol.">
        <title>Intragenic Hill-Robertson interference influences selection intensity on synonymous mutations in Drosophila.</title>
        <authorList>
            <person name="Comeron J.M."/>
            <person name="Guthrie T.B."/>
        </authorList>
    </citation>
    <scope>NUCLEOTIDE SEQUENCE [GENOMIC DNA] OF 8-873</scope>
</reference>
<gene>
    <name evidence="1" type="primary">iHog</name>
    <name type="ORF">GG23567</name>
</gene>
<name>IHOG_DROER</name>
<sequence>MTLLTSSLLLFSLLTSRLEAIPVLEKSPAHPAHSAHPAHPSHPSPGVRILRAPESLVAPLGDEVVLECETSLQPERFEWSHRSSRSQGAGFKYLRTGTAKANVSQEAAISRLRVLVREDTLGEYRCVGWFGPLVVTSTIARLELASTSLVGAQESESPLQWRVAAGNSVLWSCGQQVQSNPSASWSYYRNGVEIKPEFIGTNGNLILSNVSSESSGSYSCQATNPASGERIQLPGLLQLQVTPEQRSLSKSPHLLKGQPSSQEITIREGSSLLLLCPGVGSPPPTVVWSSPDVVGAVKNKRSKVFGHALEISDTRVQDAGTYICFQDNGVRPALEHYIKVHVEQPPQIVRPPWADLTNEGDRLKLECEATGVPSPEIYWLLNGHSSIDDTEAELSNNFLILHSVLKRHAGYVQCFARNRLGEHSAGTLLQVNPKQIQEPRESGGTHRPKPNQGSKQKQMYPPSPPNVTRLSDESVMLRWMVPRNDGLPIVIFKVQYRMVGKRKNWQTTNDNIPYGKPKWNSELGKSFTASVTDLKPQHTYRFRILAVYSNNDNKESNTSAKFYLQPGAALDPMPVPELLEIEEYSETAVVLHWSLASDADEHLITGYYAYYRPSSSAGEYFKATIEGAHARSFKIAPLETATMYEFKLQSFSAVSASEFSALKQGRTQRPKTSTTEEPTLQMGDRDTTTPSHNETFNMSPMLTGTLGGGAVLTLLLISICLCVCRRRSSRSRGNNPNKPRMAELRDDFVPLGNCSPTKQRQRTRHIHITLNPLAQQQQGMEEKNDTDQDAPYYQRPSSYDYDPGLRRMSSSSLRRSQRTLERAGGSNGSNNGNNNNLNQSTETGPVENPGKPGRVLMKRPRLSSRSENLSSGSLNSVGV</sequence>
<keyword id="KW-1015">Disulfide bond</keyword>
<keyword id="KW-0325">Glycoprotein</keyword>
<keyword id="KW-0358">Heparin-binding</keyword>
<keyword id="KW-0393">Immunoglobulin domain</keyword>
<keyword id="KW-0472">Membrane</keyword>
<keyword id="KW-0654">Proteoglycan</keyword>
<keyword id="KW-0677">Repeat</keyword>
<keyword id="KW-0732">Signal</keyword>
<keyword id="KW-0812">Transmembrane</keyword>
<keyword id="KW-1133">Transmembrane helix</keyword>
<proteinExistence type="inferred from homology"/>
<comment type="function">
    <text evidence="1">Mediates response to the active Hedgehog (Hh) protein signal in embryos, functioning upstream or at the level of patched (ptc).</text>
</comment>
<comment type="subunit">
    <text evidence="1">Homodimer. Heterotetramer; 2 iHog chains bind 2 hh chains when facilitated by heparin, heparin is required to promote high-affinity interactions between hh and iHog (By similarity).</text>
</comment>
<comment type="subcellular location">
    <subcellularLocation>
        <location evidence="2">Membrane</location>
        <topology evidence="1 2">Single-pass type I membrane protein</topology>
    </subcellularLocation>
</comment>
<comment type="domain">
    <text evidence="1">The first fibronectin type-III domain mediates a specific interaction with Hh protein, in vitro. The second fibronectin type-III domain is additionally required for in vivo signaling activity (By similarity).</text>
</comment>
<comment type="similarity">
    <text evidence="2 6">Belongs to the immunoglobulin superfamily. IHOG family.</text>
</comment>
<evidence type="ECO:0000250" key="1">
    <source>
        <dbReference type="UniProtKB" id="Q9VM64"/>
    </source>
</evidence>
<evidence type="ECO:0000255" key="2"/>
<evidence type="ECO:0000255" key="3">
    <source>
        <dbReference type="PROSITE-ProRule" id="PRU00114"/>
    </source>
</evidence>
<evidence type="ECO:0000255" key="4">
    <source>
        <dbReference type="PROSITE-ProRule" id="PRU00316"/>
    </source>
</evidence>
<evidence type="ECO:0000256" key="5">
    <source>
        <dbReference type="SAM" id="MobiDB-lite"/>
    </source>
</evidence>
<evidence type="ECO:0000305" key="6"/>
<evidence type="ECO:0000312" key="7">
    <source>
        <dbReference type="EMBL" id="ABA86417.1"/>
    </source>
</evidence>
<evidence type="ECO:0000312" key="8">
    <source>
        <dbReference type="EMBL" id="EDV59153.1"/>
    </source>
</evidence>
<organism>
    <name type="scientific">Drosophila erecta</name>
    <name type="common">Fruit fly</name>
    <dbReference type="NCBI Taxonomy" id="7220"/>
    <lineage>
        <taxon>Eukaryota</taxon>
        <taxon>Metazoa</taxon>
        <taxon>Ecdysozoa</taxon>
        <taxon>Arthropoda</taxon>
        <taxon>Hexapoda</taxon>
        <taxon>Insecta</taxon>
        <taxon>Pterygota</taxon>
        <taxon>Neoptera</taxon>
        <taxon>Endopterygota</taxon>
        <taxon>Diptera</taxon>
        <taxon>Brachycera</taxon>
        <taxon>Muscomorpha</taxon>
        <taxon>Ephydroidea</taxon>
        <taxon>Drosophilidae</taxon>
        <taxon>Drosophila</taxon>
        <taxon>Sophophora</taxon>
    </lineage>
</organism>
<feature type="signal peptide" evidence="2">
    <location>
        <begin position="1"/>
        <end position="20"/>
    </location>
</feature>
<feature type="chain" id="PRO_0000383613" description="Interference hedgehog" evidence="2">
    <location>
        <begin position="21"/>
        <end position="879"/>
    </location>
</feature>
<feature type="topological domain" description="Extracellular" evidence="2">
    <location>
        <begin position="21"/>
        <end position="703"/>
    </location>
</feature>
<feature type="transmembrane region" description="Helical" evidence="2">
    <location>
        <begin position="704"/>
        <end position="724"/>
    </location>
</feature>
<feature type="topological domain" description="Cytoplasmic" evidence="2">
    <location>
        <begin position="725"/>
        <end position="879"/>
    </location>
</feature>
<feature type="domain" description="Ig-like C2-type 1" evidence="2">
    <location>
        <begin position="45"/>
        <end position="142"/>
    </location>
</feature>
<feature type="domain" description="Ig-like C2-type 2" evidence="2">
    <location>
        <begin position="132"/>
        <end position="232"/>
    </location>
</feature>
<feature type="domain" description="Ig-like C2-type 3" evidence="2">
    <location>
        <begin position="252"/>
        <end position="340"/>
    </location>
</feature>
<feature type="domain" description="Ig-like C2-type 4" evidence="2">
    <location>
        <begin position="346"/>
        <end position="432"/>
    </location>
</feature>
<feature type="domain" description="Fibronectin type-III 1" evidence="4">
    <location>
        <begin position="461"/>
        <end position="567"/>
    </location>
</feature>
<feature type="domain" description="Fibronectin type-III 2" evidence="4">
    <location>
        <begin position="575"/>
        <end position="670"/>
    </location>
</feature>
<feature type="region of interest" description="Disordered" evidence="5">
    <location>
        <begin position="426"/>
        <end position="467"/>
    </location>
</feature>
<feature type="region of interest" description="Disordered" evidence="5">
    <location>
        <begin position="662"/>
        <end position="698"/>
    </location>
</feature>
<feature type="region of interest" description="Disordered" evidence="5">
    <location>
        <begin position="728"/>
        <end position="879"/>
    </location>
</feature>
<feature type="compositionally biased region" description="Polar residues" evidence="5">
    <location>
        <begin position="665"/>
        <end position="678"/>
    </location>
</feature>
<feature type="compositionally biased region" description="Polar residues" evidence="5">
    <location>
        <begin position="688"/>
        <end position="698"/>
    </location>
</feature>
<feature type="compositionally biased region" description="Low complexity" evidence="5">
    <location>
        <begin position="822"/>
        <end position="836"/>
    </location>
</feature>
<feature type="compositionally biased region" description="Low complexity" evidence="5">
    <location>
        <begin position="863"/>
        <end position="879"/>
    </location>
</feature>
<feature type="binding site" evidence="1">
    <location>
        <position position="497"/>
    </location>
    <ligand>
        <name>heparin</name>
        <dbReference type="ChEBI" id="CHEBI:28304"/>
    </ligand>
</feature>
<feature type="binding site" evidence="1">
    <location>
        <position position="501"/>
    </location>
    <ligand>
        <name>heparin</name>
        <dbReference type="ChEBI" id="CHEBI:28304"/>
    </ligand>
</feature>
<feature type="binding site" evidence="1">
    <location>
        <position position="503"/>
    </location>
    <ligand>
        <name>heparin</name>
        <dbReference type="ChEBI" id="CHEBI:28304"/>
    </ligand>
</feature>
<feature type="binding site" evidence="1">
    <location>
        <position position="541"/>
    </location>
    <ligand>
        <name>heparin</name>
        <dbReference type="ChEBI" id="CHEBI:28304"/>
    </ligand>
</feature>
<feature type="glycosylation site" description="N-linked (GlcNAc...) asparagine" evidence="2">
    <location>
        <position position="102"/>
    </location>
</feature>
<feature type="glycosylation site" description="N-linked (GlcNAc...) asparagine" evidence="2">
    <location>
        <position position="209"/>
    </location>
</feature>
<feature type="glycosylation site" description="N-linked (GlcNAc...) asparagine" evidence="2">
    <location>
        <position position="466"/>
    </location>
</feature>
<feature type="glycosylation site" description="N-linked (GlcNAc...) asparagine" evidence="2">
    <location>
        <position position="557"/>
    </location>
</feature>
<feature type="glycosylation site" description="N-linked (GlcNAc...) asparagine" evidence="2">
    <location>
        <position position="693"/>
    </location>
</feature>
<feature type="disulfide bond" evidence="3">
    <location>
        <begin position="68"/>
        <end position="126"/>
    </location>
</feature>
<feature type="disulfide bond" evidence="3">
    <location>
        <begin position="173"/>
        <end position="220"/>
    </location>
</feature>
<feature type="disulfide bond" evidence="3">
    <location>
        <begin position="276"/>
        <end position="324"/>
    </location>
</feature>
<feature type="disulfide bond" evidence="3">
    <location>
        <begin position="367"/>
        <end position="414"/>
    </location>
</feature>